<comment type="function">
    <text evidence="1">IGPS catalyzes the conversion of PRFAR and glutamine to IGP, AICAR and glutamate. The HisF subunit catalyzes the cyclization activity that produces IGP and AICAR from PRFAR using the ammonia provided by the HisH subunit.</text>
</comment>
<comment type="catalytic activity">
    <reaction evidence="1">
        <text>5-[(5-phospho-1-deoxy-D-ribulos-1-ylimino)methylamino]-1-(5-phospho-beta-D-ribosyl)imidazole-4-carboxamide + L-glutamine = D-erythro-1-(imidazol-4-yl)glycerol 3-phosphate + 5-amino-1-(5-phospho-beta-D-ribosyl)imidazole-4-carboxamide + L-glutamate + H(+)</text>
        <dbReference type="Rhea" id="RHEA:24793"/>
        <dbReference type="ChEBI" id="CHEBI:15378"/>
        <dbReference type="ChEBI" id="CHEBI:29985"/>
        <dbReference type="ChEBI" id="CHEBI:58278"/>
        <dbReference type="ChEBI" id="CHEBI:58359"/>
        <dbReference type="ChEBI" id="CHEBI:58475"/>
        <dbReference type="ChEBI" id="CHEBI:58525"/>
        <dbReference type="EC" id="4.3.2.10"/>
    </reaction>
</comment>
<comment type="pathway">
    <text evidence="1">Amino-acid biosynthesis; L-histidine biosynthesis; L-histidine from 5-phospho-alpha-D-ribose 1-diphosphate: step 5/9.</text>
</comment>
<comment type="subunit">
    <text evidence="1">Heterodimer of HisH and HisF.</text>
</comment>
<comment type="subcellular location">
    <subcellularLocation>
        <location evidence="1">Cytoplasm</location>
    </subcellularLocation>
</comment>
<comment type="similarity">
    <text evidence="1">Belongs to the HisA/HisF family.</text>
</comment>
<organism>
    <name type="scientific">Bacteroides fragilis (strain ATCC 25285 / DSM 2151 / CCUG 4856 / JCM 11019 / LMG 10263 / NCTC 9343 / Onslow / VPI 2553 / EN-2)</name>
    <dbReference type="NCBI Taxonomy" id="272559"/>
    <lineage>
        <taxon>Bacteria</taxon>
        <taxon>Pseudomonadati</taxon>
        <taxon>Bacteroidota</taxon>
        <taxon>Bacteroidia</taxon>
        <taxon>Bacteroidales</taxon>
        <taxon>Bacteroidaceae</taxon>
        <taxon>Bacteroides</taxon>
    </lineage>
</organism>
<name>HIS6_BACFN</name>
<dbReference type="EC" id="4.3.2.10" evidence="1"/>
<dbReference type="EMBL" id="CR626927">
    <property type="protein sequence ID" value="CAH08583.1"/>
    <property type="molecule type" value="Genomic_DNA"/>
</dbReference>
<dbReference type="RefSeq" id="WP_010993170.1">
    <property type="nucleotide sequence ID" value="NC_003228.3"/>
</dbReference>
<dbReference type="SMR" id="Q5LBD7"/>
<dbReference type="PaxDb" id="272559-BF9343_2802"/>
<dbReference type="GeneID" id="60366735"/>
<dbReference type="KEGG" id="bfs:BF9343_2802"/>
<dbReference type="eggNOG" id="COG0107">
    <property type="taxonomic scope" value="Bacteria"/>
</dbReference>
<dbReference type="HOGENOM" id="CLU_048577_4_0_10"/>
<dbReference type="UniPathway" id="UPA00031">
    <property type="reaction ID" value="UER00010"/>
</dbReference>
<dbReference type="Proteomes" id="UP000006731">
    <property type="component" value="Chromosome"/>
</dbReference>
<dbReference type="GO" id="GO:0005737">
    <property type="term" value="C:cytoplasm"/>
    <property type="evidence" value="ECO:0007669"/>
    <property type="project" value="UniProtKB-SubCell"/>
</dbReference>
<dbReference type="GO" id="GO:0000107">
    <property type="term" value="F:imidazoleglycerol-phosphate synthase activity"/>
    <property type="evidence" value="ECO:0007669"/>
    <property type="project" value="UniProtKB-UniRule"/>
</dbReference>
<dbReference type="GO" id="GO:0016829">
    <property type="term" value="F:lyase activity"/>
    <property type="evidence" value="ECO:0007669"/>
    <property type="project" value="UniProtKB-KW"/>
</dbReference>
<dbReference type="GO" id="GO:0000105">
    <property type="term" value="P:L-histidine biosynthetic process"/>
    <property type="evidence" value="ECO:0007669"/>
    <property type="project" value="UniProtKB-UniRule"/>
</dbReference>
<dbReference type="CDD" id="cd04731">
    <property type="entry name" value="HisF"/>
    <property type="match status" value="1"/>
</dbReference>
<dbReference type="FunFam" id="3.20.20.70:FF:000006">
    <property type="entry name" value="Imidazole glycerol phosphate synthase subunit HisF"/>
    <property type="match status" value="1"/>
</dbReference>
<dbReference type="Gene3D" id="3.20.20.70">
    <property type="entry name" value="Aldolase class I"/>
    <property type="match status" value="1"/>
</dbReference>
<dbReference type="HAMAP" id="MF_01013">
    <property type="entry name" value="HisF"/>
    <property type="match status" value="1"/>
</dbReference>
<dbReference type="InterPro" id="IPR013785">
    <property type="entry name" value="Aldolase_TIM"/>
</dbReference>
<dbReference type="InterPro" id="IPR006062">
    <property type="entry name" value="His_biosynth"/>
</dbReference>
<dbReference type="InterPro" id="IPR004651">
    <property type="entry name" value="HisF"/>
</dbReference>
<dbReference type="InterPro" id="IPR050064">
    <property type="entry name" value="IGPS_HisA/HisF"/>
</dbReference>
<dbReference type="InterPro" id="IPR011060">
    <property type="entry name" value="RibuloseP-bd_barrel"/>
</dbReference>
<dbReference type="NCBIfam" id="TIGR00735">
    <property type="entry name" value="hisF"/>
    <property type="match status" value="1"/>
</dbReference>
<dbReference type="PANTHER" id="PTHR21235:SF2">
    <property type="entry name" value="IMIDAZOLE GLYCEROL PHOSPHATE SYNTHASE HISHF"/>
    <property type="match status" value="1"/>
</dbReference>
<dbReference type="PANTHER" id="PTHR21235">
    <property type="entry name" value="IMIDAZOLE GLYCEROL PHOSPHATE SYNTHASE SUBUNIT HISF/H IGP SYNTHASE SUBUNIT HISF/H"/>
    <property type="match status" value="1"/>
</dbReference>
<dbReference type="Pfam" id="PF00977">
    <property type="entry name" value="His_biosynth"/>
    <property type="match status" value="1"/>
</dbReference>
<dbReference type="SUPFAM" id="SSF51366">
    <property type="entry name" value="Ribulose-phoshate binding barrel"/>
    <property type="match status" value="1"/>
</dbReference>
<sequence>MLAKRIIPCLDIKDGQTVKGTNFVNLRQAGDPVELGRAYSEQGADELVFLDITASHEGRKTFAELVRRIAANISIPFTVGGGINELSDVDRLLNAGADKISINSSAIRNPQLIDDIAKHFGSQVCVLAVDARQTGNGWKCYLNGGRIETDKELRTWTKEAQERGAGEVLFTSMNHDGVKTGYANEALAELASQLSIPVIASGGAGRMEHFRDAFTLGKADAALAASVFHFGEIKIPELKSYLCGQGITVR</sequence>
<gene>
    <name evidence="1" type="primary">hisF</name>
    <name type="ordered locus">BF2889</name>
</gene>
<evidence type="ECO:0000255" key="1">
    <source>
        <dbReference type="HAMAP-Rule" id="MF_01013"/>
    </source>
</evidence>
<proteinExistence type="inferred from homology"/>
<reference key="1">
    <citation type="journal article" date="2005" name="Science">
        <title>Extensive DNA inversions in the B. fragilis genome control variable gene expression.</title>
        <authorList>
            <person name="Cerdeno-Tarraga A.-M."/>
            <person name="Patrick S."/>
            <person name="Crossman L.C."/>
            <person name="Blakely G."/>
            <person name="Abratt V."/>
            <person name="Lennard N."/>
            <person name="Poxton I."/>
            <person name="Duerden B."/>
            <person name="Harris B."/>
            <person name="Quail M.A."/>
            <person name="Barron A."/>
            <person name="Clark L."/>
            <person name="Corton C."/>
            <person name="Doggett J."/>
            <person name="Holden M.T.G."/>
            <person name="Larke N."/>
            <person name="Line A."/>
            <person name="Lord A."/>
            <person name="Norbertczak H."/>
            <person name="Ormond D."/>
            <person name="Price C."/>
            <person name="Rabbinowitsch E."/>
            <person name="Woodward J."/>
            <person name="Barrell B.G."/>
            <person name="Parkhill J."/>
        </authorList>
    </citation>
    <scope>NUCLEOTIDE SEQUENCE [LARGE SCALE GENOMIC DNA]</scope>
    <source>
        <strain>ATCC 25285 / DSM 2151 / CCUG 4856 / JCM 11019 / LMG 10263 / NCTC 9343 / Onslow / VPI 2553 / EN-2</strain>
    </source>
</reference>
<protein>
    <recommendedName>
        <fullName evidence="1">Imidazole glycerol phosphate synthase subunit HisF</fullName>
        <ecNumber evidence="1">4.3.2.10</ecNumber>
    </recommendedName>
    <alternativeName>
        <fullName evidence="1">IGP synthase cyclase subunit</fullName>
    </alternativeName>
    <alternativeName>
        <fullName evidence="1">IGP synthase subunit HisF</fullName>
    </alternativeName>
    <alternativeName>
        <fullName evidence="1">ImGP synthase subunit HisF</fullName>
        <shortName evidence="1">IGPS subunit HisF</shortName>
    </alternativeName>
</protein>
<accession>Q5LBD7</accession>
<feature type="chain" id="PRO_0000142121" description="Imidazole glycerol phosphate synthase subunit HisF">
    <location>
        <begin position="1"/>
        <end position="250"/>
    </location>
</feature>
<feature type="active site" evidence="1">
    <location>
        <position position="11"/>
    </location>
</feature>
<feature type="active site" evidence="1">
    <location>
        <position position="130"/>
    </location>
</feature>
<keyword id="KW-0028">Amino-acid biosynthesis</keyword>
<keyword id="KW-0963">Cytoplasm</keyword>
<keyword id="KW-0368">Histidine biosynthesis</keyword>
<keyword id="KW-0456">Lyase</keyword>